<keyword id="KW-1185">Reference proteome</keyword>
<keyword id="KW-0687">Ribonucleoprotein</keyword>
<keyword id="KW-0689">Ribosomal protein</keyword>
<dbReference type="EMBL" id="CP000884">
    <property type="protein sequence ID" value="ABX38687.1"/>
    <property type="molecule type" value="Genomic_DNA"/>
</dbReference>
<dbReference type="RefSeq" id="WP_012207856.1">
    <property type="nucleotide sequence ID" value="NC_010002.1"/>
</dbReference>
<dbReference type="SMR" id="A9C1M4"/>
<dbReference type="STRING" id="398578.Daci_6059"/>
<dbReference type="GeneID" id="94689303"/>
<dbReference type="KEGG" id="dac:Daci_6059"/>
<dbReference type="eggNOG" id="COG0230">
    <property type="taxonomic scope" value="Bacteria"/>
</dbReference>
<dbReference type="HOGENOM" id="CLU_129938_2_0_4"/>
<dbReference type="Proteomes" id="UP000000784">
    <property type="component" value="Chromosome"/>
</dbReference>
<dbReference type="GO" id="GO:1990904">
    <property type="term" value="C:ribonucleoprotein complex"/>
    <property type="evidence" value="ECO:0007669"/>
    <property type="project" value="UniProtKB-KW"/>
</dbReference>
<dbReference type="GO" id="GO:0005840">
    <property type="term" value="C:ribosome"/>
    <property type="evidence" value="ECO:0007669"/>
    <property type="project" value="UniProtKB-KW"/>
</dbReference>
<dbReference type="GO" id="GO:0003735">
    <property type="term" value="F:structural constituent of ribosome"/>
    <property type="evidence" value="ECO:0007669"/>
    <property type="project" value="InterPro"/>
</dbReference>
<dbReference type="GO" id="GO:0006412">
    <property type="term" value="P:translation"/>
    <property type="evidence" value="ECO:0007669"/>
    <property type="project" value="UniProtKB-UniRule"/>
</dbReference>
<dbReference type="FunFam" id="1.10.287.3980:FF:000001">
    <property type="entry name" value="Mitochondrial ribosomal protein L34"/>
    <property type="match status" value="1"/>
</dbReference>
<dbReference type="Gene3D" id="1.10.287.3980">
    <property type="match status" value="1"/>
</dbReference>
<dbReference type="HAMAP" id="MF_00391">
    <property type="entry name" value="Ribosomal_bL34"/>
    <property type="match status" value="1"/>
</dbReference>
<dbReference type="InterPro" id="IPR000271">
    <property type="entry name" value="Ribosomal_bL34"/>
</dbReference>
<dbReference type="InterPro" id="IPR020939">
    <property type="entry name" value="Ribosomal_bL34_CS"/>
</dbReference>
<dbReference type="NCBIfam" id="TIGR01030">
    <property type="entry name" value="rpmH_bact"/>
    <property type="match status" value="1"/>
</dbReference>
<dbReference type="PANTHER" id="PTHR14503:SF4">
    <property type="entry name" value="LARGE RIBOSOMAL SUBUNIT PROTEIN BL34M"/>
    <property type="match status" value="1"/>
</dbReference>
<dbReference type="PANTHER" id="PTHR14503">
    <property type="entry name" value="MITOCHONDRIAL RIBOSOMAL PROTEIN 34 FAMILY MEMBER"/>
    <property type="match status" value="1"/>
</dbReference>
<dbReference type="Pfam" id="PF00468">
    <property type="entry name" value="Ribosomal_L34"/>
    <property type="match status" value="1"/>
</dbReference>
<dbReference type="PROSITE" id="PS00784">
    <property type="entry name" value="RIBOSOMAL_L34"/>
    <property type="match status" value="1"/>
</dbReference>
<evidence type="ECO:0000255" key="1">
    <source>
        <dbReference type="HAMAP-Rule" id="MF_00391"/>
    </source>
</evidence>
<evidence type="ECO:0000305" key="2"/>
<sequence length="44" mass="5110">MKRTYQPSKTRRARTHGFLVRMKTKGGRAVINARRAKGRKRLAV</sequence>
<feature type="chain" id="PRO_1000196033" description="Large ribosomal subunit protein bL34">
    <location>
        <begin position="1"/>
        <end position="44"/>
    </location>
</feature>
<organism>
    <name type="scientific">Delftia acidovorans (strain DSM 14801 / SPH-1)</name>
    <dbReference type="NCBI Taxonomy" id="398578"/>
    <lineage>
        <taxon>Bacteria</taxon>
        <taxon>Pseudomonadati</taxon>
        <taxon>Pseudomonadota</taxon>
        <taxon>Betaproteobacteria</taxon>
        <taxon>Burkholderiales</taxon>
        <taxon>Comamonadaceae</taxon>
        <taxon>Delftia</taxon>
    </lineage>
</organism>
<name>RL34_DELAS</name>
<proteinExistence type="inferred from homology"/>
<gene>
    <name evidence="1" type="primary">rpmH</name>
    <name type="ordered locus">Daci_6059</name>
</gene>
<accession>A9C1M4</accession>
<reference key="1">
    <citation type="submission" date="2007-11" db="EMBL/GenBank/DDBJ databases">
        <title>Complete sequence of Delftia acidovorans DSM 14801 / SPH-1.</title>
        <authorList>
            <person name="Copeland A."/>
            <person name="Lucas S."/>
            <person name="Lapidus A."/>
            <person name="Barry K."/>
            <person name="Glavina del Rio T."/>
            <person name="Dalin E."/>
            <person name="Tice H."/>
            <person name="Pitluck S."/>
            <person name="Lowry S."/>
            <person name="Clum A."/>
            <person name="Schmutz J."/>
            <person name="Larimer F."/>
            <person name="Land M."/>
            <person name="Hauser L."/>
            <person name="Kyrpides N."/>
            <person name="Kim E."/>
            <person name="Schleheck D."/>
            <person name="Richardson P."/>
        </authorList>
    </citation>
    <scope>NUCLEOTIDE SEQUENCE [LARGE SCALE GENOMIC DNA]</scope>
    <source>
        <strain>DSM 14801 / SPH-1</strain>
    </source>
</reference>
<protein>
    <recommendedName>
        <fullName evidence="1">Large ribosomal subunit protein bL34</fullName>
    </recommendedName>
    <alternativeName>
        <fullName evidence="2">50S ribosomal protein L34</fullName>
    </alternativeName>
</protein>
<comment type="similarity">
    <text evidence="1">Belongs to the bacterial ribosomal protein bL34 family.</text>
</comment>